<sequence>MAENQYYGTGRRKSSSARVFLKPGSGKIVINQRSLEVYFGRETARMVVNQPLELVDMVTKFDMYITVKGGGISGQAGAIRHGITRALMEYDESLRGELRKAGFVTRDAREVERKKVGLRKARRRPQFSKR</sequence>
<feature type="chain" id="PRO_0000111447" description="Small ribosomal subunit protein uS9">
    <location>
        <begin position="1"/>
        <end position="130"/>
    </location>
</feature>
<keyword id="KW-1185">Reference proteome</keyword>
<keyword id="KW-0687">Ribonucleoprotein</keyword>
<keyword id="KW-0689">Ribosomal protein</keyword>
<proteinExistence type="inferred from homology"/>
<evidence type="ECO:0000255" key="1">
    <source>
        <dbReference type="HAMAP-Rule" id="MF_00532"/>
    </source>
</evidence>
<evidence type="ECO:0000305" key="2"/>
<accession>Q8ZB62</accession>
<accession>Q0WB89</accession>
<protein>
    <recommendedName>
        <fullName evidence="1">Small ribosomal subunit protein uS9</fullName>
    </recommendedName>
    <alternativeName>
        <fullName evidence="2">30S ribosomal protein S9</fullName>
    </alternativeName>
</protein>
<dbReference type="EMBL" id="AL590842">
    <property type="protein sequence ID" value="CAL22150.1"/>
    <property type="molecule type" value="Genomic_DNA"/>
</dbReference>
<dbReference type="EMBL" id="AE009952">
    <property type="protein sequence ID" value="AAM83727.1"/>
    <property type="status" value="ALT_INIT"/>
    <property type="molecule type" value="Genomic_DNA"/>
</dbReference>
<dbReference type="EMBL" id="AE017042">
    <property type="protein sequence ID" value="AAS63964.1"/>
    <property type="status" value="ALT_INIT"/>
    <property type="molecule type" value="Genomic_DNA"/>
</dbReference>
<dbReference type="PIR" id="AC0433">
    <property type="entry name" value="AC0433"/>
</dbReference>
<dbReference type="RefSeq" id="WP_002210133.1">
    <property type="nucleotide sequence ID" value="NZ_WUCM01000069.1"/>
</dbReference>
<dbReference type="RefSeq" id="YP_002348449.1">
    <property type="nucleotide sequence ID" value="NC_003143.1"/>
</dbReference>
<dbReference type="SMR" id="Q8ZB62"/>
<dbReference type="STRING" id="214092.YPO3562"/>
<dbReference type="PaxDb" id="214092-YPO3562"/>
<dbReference type="EnsemblBacteria" id="AAS63964">
    <property type="protein sequence ID" value="AAS63964"/>
    <property type="gene ID" value="YP_3817"/>
</dbReference>
<dbReference type="GeneID" id="96662997"/>
<dbReference type="KEGG" id="ype:YPO3562"/>
<dbReference type="KEGG" id="ypk:y0133"/>
<dbReference type="KEGG" id="ypm:YP_3817"/>
<dbReference type="PATRIC" id="fig|214092.21.peg.4056"/>
<dbReference type="eggNOG" id="COG0103">
    <property type="taxonomic scope" value="Bacteria"/>
</dbReference>
<dbReference type="HOGENOM" id="CLU_046483_2_1_6"/>
<dbReference type="OMA" id="KFQFSKR"/>
<dbReference type="OrthoDB" id="9803965at2"/>
<dbReference type="Proteomes" id="UP000000815">
    <property type="component" value="Chromosome"/>
</dbReference>
<dbReference type="Proteomes" id="UP000001019">
    <property type="component" value="Chromosome"/>
</dbReference>
<dbReference type="Proteomes" id="UP000002490">
    <property type="component" value="Chromosome"/>
</dbReference>
<dbReference type="GO" id="GO:0022627">
    <property type="term" value="C:cytosolic small ribosomal subunit"/>
    <property type="evidence" value="ECO:0000318"/>
    <property type="project" value="GO_Central"/>
</dbReference>
<dbReference type="GO" id="GO:0003723">
    <property type="term" value="F:RNA binding"/>
    <property type="evidence" value="ECO:0000318"/>
    <property type="project" value="GO_Central"/>
</dbReference>
<dbReference type="GO" id="GO:0003735">
    <property type="term" value="F:structural constituent of ribosome"/>
    <property type="evidence" value="ECO:0000318"/>
    <property type="project" value="GO_Central"/>
</dbReference>
<dbReference type="GO" id="GO:0006412">
    <property type="term" value="P:translation"/>
    <property type="evidence" value="ECO:0007669"/>
    <property type="project" value="UniProtKB-UniRule"/>
</dbReference>
<dbReference type="FunFam" id="3.30.230.10:FF:000001">
    <property type="entry name" value="30S ribosomal protein S9"/>
    <property type="match status" value="1"/>
</dbReference>
<dbReference type="Gene3D" id="3.30.230.10">
    <property type="match status" value="1"/>
</dbReference>
<dbReference type="HAMAP" id="MF_00532_B">
    <property type="entry name" value="Ribosomal_uS9_B"/>
    <property type="match status" value="1"/>
</dbReference>
<dbReference type="InterPro" id="IPR020568">
    <property type="entry name" value="Ribosomal_Su5_D2-typ_SF"/>
</dbReference>
<dbReference type="InterPro" id="IPR000754">
    <property type="entry name" value="Ribosomal_uS9"/>
</dbReference>
<dbReference type="InterPro" id="IPR023035">
    <property type="entry name" value="Ribosomal_uS9_bac/plastid"/>
</dbReference>
<dbReference type="InterPro" id="IPR020574">
    <property type="entry name" value="Ribosomal_uS9_CS"/>
</dbReference>
<dbReference type="InterPro" id="IPR014721">
    <property type="entry name" value="Ribsml_uS5_D2-typ_fold_subgr"/>
</dbReference>
<dbReference type="NCBIfam" id="NF001099">
    <property type="entry name" value="PRK00132.1"/>
    <property type="match status" value="1"/>
</dbReference>
<dbReference type="PANTHER" id="PTHR21569">
    <property type="entry name" value="RIBOSOMAL PROTEIN S9"/>
    <property type="match status" value="1"/>
</dbReference>
<dbReference type="PANTHER" id="PTHR21569:SF1">
    <property type="entry name" value="SMALL RIBOSOMAL SUBUNIT PROTEIN US9M"/>
    <property type="match status" value="1"/>
</dbReference>
<dbReference type="Pfam" id="PF00380">
    <property type="entry name" value="Ribosomal_S9"/>
    <property type="match status" value="1"/>
</dbReference>
<dbReference type="SUPFAM" id="SSF54211">
    <property type="entry name" value="Ribosomal protein S5 domain 2-like"/>
    <property type="match status" value="1"/>
</dbReference>
<dbReference type="PROSITE" id="PS00360">
    <property type="entry name" value="RIBOSOMAL_S9"/>
    <property type="match status" value="1"/>
</dbReference>
<reference key="1">
    <citation type="journal article" date="2001" name="Nature">
        <title>Genome sequence of Yersinia pestis, the causative agent of plague.</title>
        <authorList>
            <person name="Parkhill J."/>
            <person name="Wren B.W."/>
            <person name="Thomson N.R."/>
            <person name="Titball R.W."/>
            <person name="Holden M.T.G."/>
            <person name="Prentice M.B."/>
            <person name="Sebaihia M."/>
            <person name="James K.D."/>
            <person name="Churcher C.M."/>
            <person name="Mungall K.L."/>
            <person name="Baker S."/>
            <person name="Basham D."/>
            <person name="Bentley S.D."/>
            <person name="Brooks K."/>
            <person name="Cerdeno-Tarraga A.-M."/>
            <person name="Chillingworth T."/>
            <person name="Cronin A."/>
            <person name="Davies R.M."/>
            <person name="Davis P."/>
            <person name="Dougan G."/>
            <person name="Feltwell T."/>
            <person name="Hamlin N."/>
            <person name="Holroyd S."/>
            <person name="Jagels K."/>
            <person name="Karlyshev A.V."/>
            <person name="Leather S."/>
            <person name="Moule S."/>
            <person name="Oyston P.C.F."/>
            <person name="Quail M.A."/>
            <person name="Rutherford K.M."/>
            <person name="Simmonds M."/>
            <person name="Skelton J."/>
            <person name="Stevens K."/>
            <person name="Whitehead S."/>
            <person name="Barrell B.G."/>
        </authorList>
    </citation>
    <scope>NUCLEOTIDE SEQUENCE [LARGE SCALE GENOMIC DNA]</scope>
    <source>
        <strain>CO-92 / Biovar Orientalis</strain>
    </source>
</reference>
<reference key="2">
    <citation type="journal article" date="2002" name="J. Bacteriol.">
        <title>Genome sequence of Yersinia pestis KIM.</title>
        <authorList>
            <person name="Deng W."/>
            <person name="Burland V."/>
            <person name="Plunkett G. III"/>
            <person name="Boutin A."/>
            <person name="Mayhew G.F."/>
            <person name="Liss P."/>
            <person name="Perna N.T."/>
            <person name="Rose D.J."/>
            <person name="Mau B."/>
            <person name="Zhou S."/>
            <person name="Schwartz D.C."/>
            <person name="Fetherston J.D."/>
            <person name="Lindler L.E."/>
            <person name="Brubaker R.R."/>
            <person name="Plano G.V."/>
            <person name="Straley S.C."/>
            <person name="McDonough K.A."/>
            <person name="Nilles M.L."/>
            <person name="Matson J.S."/>
            <person name="Blattner F.R."/>
            <person name="Perry R.D."/>
        </authorList>
    </citation>
    <scope>NUCLEOTIDE SEQUENCE [LARGE SCALE GENOMIC DNA]</scope>
    <source>
        <strain>KIM10+ / Biovar Mediaevalis</strain>
    </source>
</reference>
<reference key="3">
    <citation type="journal article" date="2004" name="DNA Res.">
        <title>Complete genome sequence of Yersinia pestis strain 91001, an isolate avirulent to humans.</title>
        <authorList>
            <person name="Song Y."/>
            <person name="Tong Z."/>
            <person name="Wang J."/>
            <person name="Wang L."/>
            <person name="Guo Z."/>
            <person name="Han Y."/>
            <person name="Zhang J."/>
            <person name="Pei D."/>
            <person name="Zhou D."/>
            <person name="Qin H."/>
            <person name="Pang X."/>
            <person name="Han Y."/>
            <person name="Zhai J."/>
            <person name="Li M."/>
            <person name="Cui B."/>
            <person name="Qi Z."/>
            <person name="Jin L."/>
            <person name="Dai R."/>
            <person name="Chen F."/>
            <person name="Li S."/>
            <person name="Ye C."/>
            <person name="Du Z."/>
            <person name="Lin W."/>
            <person name="Wang J."/>
            <person name="Yu J."/>
            <person name="Yang H."/>
            <person name="Wang J."/>
            <person name="Huang P."/>
            <person name="Yang R."/>
        </authorList>
    </citation>
    <scope>NUCLEOTIDE SEQUENCE [LARGE SCALE GENOMIC DNA]</scope>
    <source>
        <strain>91001 / Biovar Mediaevalis</strain>
    </source>
</reference>
<organism>
    <name type="scientific">Yersinia pestis</name>
    <dbReference type="NCBI Taxonomy" id="632"/>
    <lineage>
        <taxon>Bacteria</taxon>
        <taxon>Pseudomonadati</taxon>
        <taxon>Pseudomonadota</taxon>
        <taxon>Gammaproteobacteria</taxon>
        <taxon>Enterobacterales</taxon>
        <taxon>Yersiniaceae</taxon>
        <taxon>Yersinia</taxon>
    </lineage>
</organism>
<gene>
    <name evidence="1" type="primary">rpsI</name>
    <name type="ordered locus">YPO3562</name>
    <name type="ordered locus">y0133</name>
    <name type="ordered locus">YP_3817</name>
</gene>
<name>RS9_YERPE</name>
<comment type="similarity">
    <text evidence="1">Belongs to the universal ribosomal protein uS9 family.</text>
</comment>
<comment type="sequence caution" evidence="2">
    <conflict type="erroneous initiation">
        <sequence resource="EMBL-CDS" id="AAM83727"/>
    </conflict>
</comment>
<comment type="sequence caution" evidence="2">
    <conflict type="erroneous initiation">
        <sequence resource="EMBL-CDS" id="AAS63964"/>
    </conflict>
</comment>